<evidence type="ECO:0000250" key="1"/>
<evidence type="ECO:0000255" key="2">
    <source>
        <dbReference type="HAMAP-Rule" id="MF_00403"/>
    </source>
</evidence>
<evidence type="ECO:0000256" key="3">
    <source>
        <dbReference type="SAM" id="MobiDB-lite"/>
    </source>
</evidence>
<evidence type="ECO:0000305" key="4"/>
<protein>
    <recommendedName>
        <fullName evidence="2">Small ribosomal subunit protein uS12</fullName>
    </recommendedName>
    <alternativeName>
        <fullName evidence="4">30S ribosomal protein S12</fullName>
    </alternativeName>
</protein>
<proteinExistence type="inferred from homology"/>
<sequence length="126" mass="13741">MPTISQLVRKGRKTVASKSTAPALKECPQKRGVCTVVKTTTPKKPNSALRKIARVRLTNGYEVTAYIPGVGHNLQEHSVVLIRGGRVKDLPGVRYHIVRGALDSAGVANRMQGRSKYGAKKPKQKK</sequence>
<name>RS12_CLOP1</name>
<feature type="chain" id="PRO_0000263550" description="Small ribosomal subunit protein uS12">
    <location>
        <begin position="1"/>
        <end position="126"/>
    </location>
</feature>
<feature type="region of interest" description="Disordered" evidence="3">
    <location>
        <begin position="1"/>
        <end position="23"/>
    </location>
</feature>
<feature type="modified residue" description="3-methylthioaspartic acid" evidence="1">
    <location>
        <position position="89"/>
    </location>
</feature>
<gene>
    <name evidence="2" type="primary">rpsL</name>
    <name type="ordered locus">CPF_2719</name>
</gene>
<comment type="function">
    <text evidence="2">With S4 and S5 plays an important role in translational accuracy.</text>
</comment>
<comment type="function">
    <text evidence="2">Interacts with and stabilizes bases of the 16S rRNA that are involved in tRNA selection in the A site and with the mRNA backbone. Located at the interface of the 30S and 50S subunits, it traverses the body of the 30S subunit contacting proteins on the other side and probably holding the rRNA structure together. The combined cluster of proteins S8, S12 and S17 appears to hold together the shoulder and platform of the 30S subunit.</text>
</comment>
<comment type="subunit">
    <text evidence="2">Part of the 30S ribosomal subunit. Contacts proteins S8 and S17. May interact with IF1 in the 30S initiation complex.</text>
</comment>
<comment type="similarity">
    <text evidence="2">Belongs to the universal ribosomal protein uS12 family.</text>
</comment>
<organism>
    <name type="scientific">Clostridium perfringens (strain ATCC 13124 / DSM 756 / JCM 1290 / NCIMB 6125 / NCTC 8237 / Type A)</name>
    <dbReference type="NCBI Taxonomy" id="195103"/>
    <lineage>
        <taxon>Bacteria</taxon>
        <taxon>Bacillati</taxon>
        <taxon>Bacillota</taxon>
        <taxon>Clostridia</taxon>
        <taxon>Eubacteriales</taxon>
        <taxon>Clostridiaceae</taxon>
        <taxon>Clostridium</taxon>
    </lineage>
</organism>
<accession>Q0TMP1</accession>
<reference key="1">
    <citation type="journal article" date="2006" name="Genome Res.">
        <title>Skewed genomic variability in strains of the toxigenic bacterial pathogen, Clostridium perfringens.</title>
        <authorList>
            <person name="Myers G.S.A."/>
            <person name="Rasko D.A."/>
            <person name="Cheung J.K."/>
            <person name="Ravel J."/>
            <person name="Seshadri R."/>
            <person name="DeBoy R.T."/>
            <person name="Ren Q."/>
            <person name="Varga J."/>
            <person name="Awad M.M."/>
            <person name="Brinkac L.M."/>
            <person name="Daugherty S.C."/>
            <person name="Haft D.H."/>
            <person name="Dodson R.J."/>
            <person name="Madupu R."/>
            <person name="Nelson W.C."/>
            <person name="Rosovitz M.J."/>
            <person name="Sullivan S.A."/>
            <person name="Khouri H."/>
            <person name="Dimitrov G.I."/>
            <person name="Watkins K.L."/>
            <person name="Mulligan S."/>
            <person name="Benton J."/>
            <person name="Radune D."/>
            <person name="Fisher D.J."/>
            <person name="Atkins H.S."/>
            <person name="Hiscox T."/>
            <person name="Jost B.H."/>
            <person name="Billington S.J."/>
            <person name="Songer J.G."/>
            <person name="McClane B.A."/>
            <person name="Titball R.W."/>
            <person name="Rood J.I."/>
            <person name="Melville S.B."/>
            <person name="Paulsen I.T."/>
        </authorList>
    </citation>
    <scope>NUCLEOTIDE SEQUENCE [LARGE SCALE GENOMIC DNA]</scope>
    <source>
        <strain>ATCC 13124 / DSM 756 / JCM 1290 / NCIMB 6125 / NCTC 8237 / S 107 / Type A</strain>
    </source>
</reference>
<dbReference type="EMBL" id="CP000246">
    <property type="protein sequence ID" value="ABG82799.1"/>
    <property type="molecule type" value="Genomic_DNA"/>
</dbReference>
<dbReference type="RefSeq" id="WP_003452165.1">
    <property type="nucleotide sequence ID" value="NC_008261.1"/>
</dbReference>
<dbReference type="SMR" id="Q0TMP1"/>
<dbReference type="STRING" id="195103.CPF_2719"/>
<dbReference type="PaxDb" id="195103-CPF_2719"/>
<dbReference type="GeneID" id="93001004"/>
<dbReference type="KEGG" id="cpf:CPF_2719"/>
<dbReference type="eggNOG" id="COG0048">
    <property type="taxonomic scope" value="Bacteria"/>
</dbReference>
<dbReference type="HOGENOM" id="CLU_104295_1_2_9"/>
<dbReference type="Proteomes" id="UP000001823">
    <property type="component" value="Chromosome"/>
</dbReference>
<dbReference type="GO" id="GO:0015935">
    <property type="term" value="C:small ribosomal subunit"/>
    <property type="evidence" value="ECO:0007669"/>
    <property type="project" value="InterPro"/>
</dbReference>
<dbReference type="GO" id="GO:0019843">
    <property type="term" value="F:rRNA binding"/>
    <property type="evidence" value="ECO:0007669"/>
    <property type="project" value="UniProtKB-UniRule"/>
</dbReference>
<dbReference type="GO" id="GO:0003735">
    <property type="term" value="F:structural constituent of ribosome"/>
    <property type="evidence" value="ECO:0007669"/>
    <property type="project" value="InterPro"/>
</dbReference>
<dbReference type="GO" id="GO:0000049">
    <property type="term" value="F:tRNA binding"/>
    <property type="evidence" value="ECO:0007669"/>
    <property type="project" value="UniProtKB-UniRule"/>
</dbReference>
<dbReference type="GO" id="GO:0006412">
    <property type="term" value="P:translation"/>
    <property type="evidence" value="ECO:0007669"/>
    <property type="project" value="UniProtKB-UniRule"/>
</dbReference>
<dbReference type="CDD" id="cd03368">
    <property type="entry name" value="Ribosomal_S12"/>
    <property type="match status" value="1"/>
</dbReference>
<dbReference type="FunFam" id="2.40.50.140:FF:000001">
    <property type="entry name" value="30S ribosomal protein S12"/>
    <property type="match status" value="1"/>
</dbReference>
<dbReference type="Gene3D" id="2.40.50.140">
    <property type="entry name" value="Nucleic acid-binding proteins"/>
    <property type="match status" value="1"/>
</dbReference>
<dbReference type="HAMAP" id="MF_00403_B">
    <property type="entry name" value="Ribosomal_uS12_B"/>
    <property type="match status" value="1"/>
</dbReference>
<dbReference type="InterPro" id="IPR012340">
    <property type="entry name" value="NA-bd_OB-fold"/>
</dbReference>
<dbReference type="InterPro" id="IPR006032">
    <property type="entry name" value="Ribosomal_uS12"/>
</dbReference>
<dbReference type="InterPro" id="IPR005679">
    <property type="entry name" value="Ribosomal_uS12_bac"/>
</dbReference>
<dbReference type="NCBIfam" id="TIGR00981">
    <property type="entry name" value="rpsL_bact"/>
    <property type="match status" value="1"/>
</dbReference>
<dbReference type="PANTHER" id="PTHR11652">
    <property type="entry name" value="30S RIBOSOMAL PROTEIN S12 FAMILY MEMBER"/>
    <property type="match status" value="1"/>
</dbReference>
<dbReference type="Pfam" id="PF00164">
    <property type="entry name" value="Ribosom_S12_S23"/>
    <property type="match status" value="1"/>
</dbReference>
<dbReference type="PIRSF" id="PIRSF002133">
    <property type="entry name" value="Ribosomal_S12/S23"/>
    <property type="match status" value="1"/>
</dbReference>
<dbReference type="PRINTS" id="PR01034">
    <property type="entry name" value="RIBOSOMALS12"/>
</dbReference>
<dbReference type="SUPFAM" id="SSF50249">
    <property type="entry name" value="Nucleic acid-binding proteins"/>
    <property type="match status" value="1"/>
</dbReference>
<dbReference type="PROSITE" id="PS00055">
    <property type="entry name" value="RIBOSOMAL_S12"/>
    <property type="match status" value="1"/>
</dbReference>
<keyword id="KW-0488">Methylation</keyword>
<keyword id="KW-0687">Ribonucleoprotein</keyword>
<keyword id="KW-0689">Ribosomal protein</keyword>
<keyword id="KW-0694">RNA-binding</keyword>
<keyword id="KW-0699">rRNA-binding</keyword>
<keyword id="KW-0820">tRNA-binding</keyword>